<proteinExistence type="inferred from homology"/>
<comment type="function">
    <text evidence="1">Involved in the small subunit (SSU) processome assembly and function, and in the 18S rRNA synthesis. Required for the early cleavages at sites A0, A1 and A2 (By similarity).</text>
</comment>
<comment type="subcellular location">
    <subcellularLocation>
        <location evidence="1">Nucleus</location>
        <location evidence="1">Nucleolus</location>
    </subcellularLocation>
</comment>
<comment type="similarity">
    <text evidence="3">Belongs to the ESF2/ABP1 family.</text>
</comment>
<dbReference type="EMBL" id="DS027045">
    <property type="protein sequence ID" value="EAW14528.1"/>
    <property type="molecule type" value="Genomic_DNA"/>
</dbReference>
<dbReference type="RefSeq" id="XP_001275954.1">
    <property type="nucleotide sequence ID" value="XM_001275953.1"/>
</dbReference>
<dbReference type="STRING" id="344612.A1C807"/>
<dbReference type="EnsemblFungi" id="EAW14528">
    <property type="protein sequence ID" value="EAW14528"/>
    <property type="gene ID" value="ACLA_075670"/>
</dbReference>
<dbReference type="GeneID" id="4707655"/>
<dbReference type="KEGG" id="act:ACLA_075670"/>
<dbReference type="VEuPathDB" id="FungiDB:ACLA_075670"/>
<dbReference type="eggNOG" id="KOG3152">
    <property type="taxonomic scope" value="Eukaryota"/>
</dbReference>
<dbReference type="HOGENOM" id="CLU_054086_0_1_1"/>
<dbReference type="OMA" id="TRKHNDF"/>
<dbReference type="OrthoDB" id="287393at2759"/>
<dbReference type="Proteomes" id="UP000006701">
    <property type="component" value="Unassembled WGS sequence"/>
</dbReference>
<dbReference type="GO" id="GO:0005730">
    <property type="term" value="C:nucleolus"/>
    <property type="evidence" value="ECO:0007669"/>
    <property type="project" value="UniProtKB-SubCell"/>
</dbReference>
<dbReference type="GO" id="GO:0003723">
    <property type="term" value="F:RNA binding"/>
    <property type="evidence" value="ECO:0007669"/>
    <property type="project" value="UniProtKB-KW"/>
</dbReference>
<dbReference type="GO" id="GO:0000480">
    <property type="term" value="P:endonucleolytic cleavage in 5'-ETS of tricistronic rRNA transcript (SSU-rRNA, 5.8S rRNA, LSU-rRNA)"/>
    <property type="evidence" value="ECO:0007669"/>
    <property type="project" value="TreeGrafter"/>
</dbReference>
<dbReference type="GO" id="GO:0000447">
    <property type="term" value="P:endonucleolytic cleavage in ITS1 to separate SSU-rRNA from 5.8S rRNA and LSU-rRNA from tricistronic rRNA transcript (SSU-rRNA, 5.8S rRNA, LSU-rRNA)"/>
    <property type="evidence" value="ECO:0007669"/>
    <property type="project" value="TreeGrafter"/>
</dbReference>
<dbReference type="GO" id="GO:0000472">
    <property type="term" value="P:endonucleolytic cleavage to generate mature 5'-end of SSU-rRNA from (SSU-rRNA, 5.8S rRNA, LSU-rRNA)"/>
    <property type="evidence" value="ECO:0007669"/>
    <property type="project" value="TreeGrafter"/>
</dbReference>
<dbReference type="GO" id="GO:0034462">
    <property type="term" value="P:small-subunit processome assembly"/>
    <property type="evidence" value="ECO:0007669"/>
    <property type="project" value="TreeGrafter"/>
</dbReference>
<dbReference type="CDD" id="cd12263">
    <property type="entry name" value="RRM_ABT1_like"/>
    <property type="match status" value="1"/>
</dbReference>
<dbReference type="Gene3D" id="3.30.70.330">
    <property type="match status" value="1"/>
</dbReference>
<dbReference type="InterPro" id="IPR039119">
    <property type="entry name" value="ABT1/Esf2"/>
</dbReference>
<dbReference type="InterPro" id="IPR034353">
    <property type="entry name" value="ABT1/ESF2_RRM"/>
</dbReference>
<dbReference type="InterPro" id="IPR012677">
    <property type="entry name" value="Nucleotide-bd_a/b_plait_sf"/>
</dbReference>
<dbReference type="InterPro" id="IPR035979">
    <property type="entry name" value="RBD_domain_sf"/>
</dbReference>
<dbReference type="PANTHER" id="PTHR12311">
    <property type="entry name" value="ACTIVATOR OF BASAL TRANSCRIPTION 1"/>
    <property type="match status" value="1"/>
</dbReference>
<dbReference type="PANTHER" id="PTHR12311:SF7">
    <property type="entry name" value="ACTIVATOR OF BASAL TRANSCRIPTION 1"/>
    <property type="match status" value="1"/>
</dbReference>
<dbReference type="SUPFAM" id="SSF54928">
    <property type="entry name" value="RNA-binding domain, RBD"/>
    <property type="match status" value="1"/>
</dbReference>
<reference key="1">
    <citation type="journal article" date="2008" name="PLoS Genet.">
        <title>Genomic islands in the pathogenic filamentous fungus Aspergillus fumigatus.</title>
        <authorList>
            <person name="Fedorova N.D."/>
            <person name="Khaldi N."/>
            <person name="Joardar V.S."/>
            <person name="Maiti R."/>
            <person name="Amedeo P."/>
            <person name="Anderson M.J."/>
            <person name="Crabtree J."/>
            <person name="Silva J.C."/>
            <person name="Badger J.H."/>
            <person name="Albarraq A."/>
            <person name="Angiuoli S."/>
            <person name="Bussey H."/>
            <person name="Bowyer P."/>
            <person name="Cotty P.J."/>
            <person name="Dyer P.S."/>
            <person name="Egan A."/>
            <person name="Galens K."/>
            <person name="Fraser-Liggett C.M."/>
            <person name="Haas B.J."/>
            <person name="Inman J.M."/>
            <person name="Kent R."/>
            <person name="Lemieux S."/>
            <person name="Malavazi I."/>
            <person name="Orvis J."/>
            <person name="Roemer T."/>
            <person name="Ronning C.M."/>
            <person name="Sundaram J.P."/>
            <person name="Sutton G."/>
            <person name="Turner G."/>
            <person name="Venter J.C."/>
            <person name="White O.R."/>
            <person name="Whitty B.R."/>
            <person name="Youngman P."/>
            <person name="Wolfe K.H."/>
            <person name="Goldman G.H."/>
            <person name="Wortman J.R."/>
            <person name="Jiang B."/>
            <person name="Denning D.W."/>
            <person name="Nierman W.C."/>
        </authorList>
    </citation>
    <scope>NUCLEOTIDE SEQUENCE [LARGE SCALE GENOMIC DNA]</scope>
    <source>
        <strain>ATCC 1007 / CBS 513.65 / DSM 816 / NCTC 3887 / NRRL 1 / QM 1276 / 107</strain>
    </source>
</reference>
<organism>
    <name type="scientific">Aspergillus clavatus (strain ATCC 1007 / CBS 513.65 / DSM 816 / NCTC 3887 / NRRL 1 / QM 1276 / 107)</name>
    <dbReference type="NCBI Taxonomy" id="344612"/>
    <lineage>
        <taxon>Eukaryota</taxon>
        <taxon>Fungi</taxon>
        <taxon>Dikarya</taxon>
        <taxon>Ascomycota</taxon>
        <taxon>Pezizomycotina</taxon>
        <taxon>Eurotiomycetes</taxon>
        <taxon>Eurotiomycetidae</taxon>
        <taxon>Eurotiales</taxon>
        <taxon>Aspergillaceae</taxon>
        <taxon>Aspergillus</taxon>
        <taxon>Aspergillus subgen. Fumigati</taxon>
    </lineage>
</organism>
<evidence type="ECO:0000250" key="1"/>
<evidence type="ECO:0000256" key="2">
    <source>
        <dbReference type="SAM" id="MobiDB-lite"/>
    </source>
</evidence>
<evidence type="ECO:0000305" key="3"/>
<sequence length="368" mass="41481">MTTRKRNEFLDIASEDEDGSDRGYDSEAAEESKGRFTKRRRTHTRADDLSDEESDLDVSDEDDERDSKAKIKTKSKRKTAKHGDEIATDDSSADEDDLQEDQYLDASAQPGSPSHTDSHTTTTTTTTSKPQKKKPLAKVKPPKKNKTGVVYLSSLPPYLKPFALKSMLETRGFEPITKVFLTPEVPSAAGPRRRSNKRKTYADGWVEFASKKTAKICAETLNASIVGGRKGGWYHDDVWNMKYLRGFKWADLMEQVQRERSEREARRRIEDTRARKEDKVFLEGVEHGKVLQGIQKKNEEKRRRQAEARADAEAAVAATAATSDAGNGPQGVKVRRLFKQNEVKVGRDKIKGDATLEDDTKRVLSKIF</sequence>
<protein>
    <recommendedName>
        <fullName>Pre-rRNA-processing protein esf2</fullName>
    </recommendedName>
    <alternativeName>
        <fullName>18S rRNA factor 2</fullName>
    </alternativeName>
</protein>
<name>ESF2_ASPCL</name>
<feature type="chain" id="PRO_0000285362" description="Pre-rRNA-processing protein esf2">
    <location>
        <begin position="1"/>
        <end position="368"/>
    </location>
</feature>
<feature type="domain" description="RRM">
    <location>
        <begin position="148"/>
        <end position="238"/>
    </location>
</feature>
<feature type="region of interest" description="Disordered" evidence="2">
    <location>
        <begin position="1"/>
        <end position="144"/>
    </location>
</feature>
<feature type="compositionally biased region" description="Basic and acidic residues" evidence="2">
    <location>
        <begin position="20"/>
        <end position="34"/>
    </location>
</feature>
<feature type="compositionally biased region" description="Acidic residues" evidence="2">
    <location>
        <begin position="49"/>
        <end position="64"/>
    </location>
</feature>
<feature type="compositionally biased region" description="Basic residues" evidence="2">
    <location>
        <begin position="70"/>
        <end position="80"/>
    </location>
</feature>
<feature type="compositionally biased region" description="Acidic residues" evidence="2">
    <location>
        <begin position="86"/>
        <end position="103"/>
    </location>
</feature>
<feature type="compositionally biased region" description="Low complexity" evidence="2">
    <location>
        <begin position="120"/>
        <end position="129"/>
    </location>
</feature>
<feature type="compositionally biased region" description="Basic residues" evidence="2">
    <location>
        <begin position="130"/>
        <end position="144"/>
    </location>
</feature>
<keyword id="KW-0539">Nucleus</keyword>
<keyword id="KW-1185">Reference proteome</keyword>
<keyword id="KW-0690">Ribosome biogenesis</keyword>
<keyword id="KW-0694">RNA-binding</keyword>
<keyword id="KW-0698">rRNA processing</keyword>
<accession>A1C807</accession>
<gene>
    <name type="primary">esf2</name>
    <name type="ORF">ACLA_075670</name>
</gene>